<organism>
    <name type="scientific">Streptococcus sanguinis (strain SK36)</name>
    <dbReference type="NCBI Taxonomy" id="388919"/>
    <lineage>
        <taxon>Bacteria</taxon>
        <taxon>Bacillati</taxon>
        <taxon>Bacillota</taxon>
        <taxon>Bacilli</taxon>
        <taxon>Lactobacillales</taxon>
        <taxon>Streptococcaceae</taxon>
        <taxon>Streptococcus</taxon>
    </lineage>
</organism>
<feature type="chain" id="PRO_1000069209" description="6-phospho-beta-galactosidase">
    <location>
        <begin position="1"/>
        <end position="468"/>
    </location>
</feature>
<feature type="active site" description="Proton donor" evidence="1">
    <location>
        <position position="160"/>
    </location>
</feature>
<feature type="active site" description="Nucleophile" evidence="1">
    <location>
        <position position="375"/>
    </location>
</feature>
<feature type="binding site" evidence="1">
    <location>
        <position position="19"/>
    </location>
    <ligand>
        <name>D-galactose 6-phosphate</name>
        <dbReference type="ChEBI" id="CHEBI:91004"/>
    </ligand>
</feature>
<feature type="binding site" evidence="1">
    <location>
        <position position="116"/>
    </location>
    <ligand>
        <name>D-galactose 6-phosphate</name>
        <dbReference type="ChEBI" id="CHEBI:91004"/>
    </ligand>
</feature>
<feature type="binding site" evidence="1">
    <location>
        <position position="159"/>
    </location>
    <ligand>
        <name>D-galactose 6-phosphate</name>
        <dbReference type="ChEBI" id="CHEBI:91004"/>
    </ligand>
</feature>
<feature type="binding site" evidence="1">
    <location>
        <position position="160"/>
    </location>
    <ligand>
        <name>D-galactose 6-phosphate</name>
        <dbReference type="ChEBI" id="CHEBI:91004"/>
    </ligand>
</feature>
<feature type="binding site" evidence="1">
    <location>
        <position position="297"/>
    </location>
    <ligand>
        <name>D-galactose 6-phosphate</name>
        <dbReference type="ChEBI" id="CHEBI:91004"/>
    </ligand>
</feature>
<feature type="binding site" evidence="1">
    <location>
        <position position="428"/>
    </location>
    <ligand>
        <name>D-galactose 6-phosphate</name>
        <dbReference type="ChEBI" id="CHEBI:91004"/>
    </ligand>
</feature>
<feature type="binding site" evidence="1">
    <location>
        <position position="429"/>
    </location>
    <ligand>
        <name>D-galactose 6-phosphate</name>
        <dbReference type="ChEBI" id="CHEBI:91004"/>
    </ligand>
</feature>
<feature type="binding site" evidence="1">
    <location>
        <position position="435"/>
    </location>
    <ligand>
        <name>D-galactose 6-phosphate</name>
        <dbReference type="ChEBI" id="CHEBI:91004"/>
    </ligand>
</feature>
<feature type="binding site" evidence="1">
    <location>
        <position position="437"/>
    </location>
    <ligand>
        <name>D-galactose 6-phosphate</name>
        <dbReference type="ChEBI" id="CHEBI:91004"/>
    </ligand>
</feature>
<dbReference type="EC" id="3.2.1.85" evidence="1"/>
<dbReference type="EMBL" id="CP000387">
    <property type="protein sequence ID" value="ABN45075.1"/>
    <property type="molecule type" value="Genomic_DNA"/>
</dbReference>
<dbReference type="RefSeq" id="WP_002923665.1">
    <property type="nucleotide sequence ID" value="NC_009009.1"/>
</dbReference>
<dbReference type="RefSeq" id="YP_001035625.1">
    <property type="nucleotide sequence ID" value="NC_009009.1"/>
</dbReference>
<dbReference type="SMR" id="A3CPH0"/>
<dbReference type="STRING" id="388919.SSA_1692"/>
<dbReference type="CAZy" id="GH1">
    <property type="family name" value="Glycoside Hydrolase Family 1"/>
</dbReference>
<dbReference type="KEGG" id="ssa:SSA_1692"/>
<dbReference type="PATRIC" id="fig|388919.9.peg.1604"/>
<dbReference type="eggNOG" id="COG2723">
    <property type="taxonomic scope" value="Bacteria"/>
</dbReference>
<dbReference type="HOGENOM" id="CLU_001859_1_3_9"/>
<dbReference type="OrthoDB" id="9765195at2"/>
<dbReference type="UniPathway" id="UPA00542">
    <property type="reaction ID" value="UER00605"/>
</dbReference>
<dbReference type="Proteomes" id="UP000002148">
    <property type="component" value="Chromosome"/>
</dbReference>
<dbReference type="GO" id="GO:0005829">
    <property type="term" value="C:cytosol"/>
    <property type="evidence" value="ECO:0007669"/>
    <property type="project" value="TreeGrafter"/>
</dbReference>
<dbReference type="GO" id="GO:0033920">
    <property type="term" value="F:6-phospho-beta-galactosidase activity"/>
    <property type="evidence" value="ECO:0007669"/>
    <property type="project" value="UniProtKB-UniRule"/>
</dbReference>
<dbReference type="GO" id="GO:0008422">
    <property type="term" value="F:beta-glucosidase activity"/>
    <property type="evidence" value="ECO:0007669"/>
    <property type="project" value="TreeGrafter"/>
</dbReference>
<dbReference type="GO" id="GO:0019512">
    <property type="term" value="P:lactose catabolic process via tagatose-6-phosphate"/>
    <property type="evidence" value="ECO:0007669"/>
    <property type="project" value="InterPro"/>
</dbReference>
<dbReference type="FunFam" id="3.20.20.80:FF:000004">
    <property type="entry name" value="Beta-glucosidase 6-phospho-beta-glucosidase"/>
    <property type="match status" value="1"/>
</dbReference>
<dbReference type="Gene3D" id="3.20.20.80">
    <property type="entry name" value="Glycosidases"/>
    <property type="match status" value="1"/>
</dbReference>
<dbReference type="HAMAP" id="MF_01574">
    <property type="entry name" value="LacG"/>
    <property type="match status" value="1"/>
</dbReference>
<dbReference type="InterPro" id="IPR005928">
    <property type="entry name" value="6P-beta-galactosidase"/>
</dbReference>
<dbReference type="InterPro" id="IPR001360">
    <property type="entry name" value="Glyco_hydro_1"/>
</dbReference>
<dbReference type="InterPro" id="IPR018120">
    <property type="entry name" value="Glyco_hydro_1_AS"/>
</dbReference>
<dbReference type="InterPro" id="IPR033132">
    <property type="entry name" value="Glyco_hydro_1_N_CS"/>
</dbReference>
<dbReference type="InterPro" id="IPR017853">
    <property type="entry name" value="Glycoside_hydrolase_SF"/>
</dbReference>
<dbReference type="NCBIfam" id="TIGR01233">
    <property type="entry name" value="lacG"/>
    <property type="match status" value="1"/>
</dbReference>
<dbReference type="NCBIfam" id="NF010036">
    <property type="entry name" value="PRK13511.1"/>
    <property type="match status" value="1"/>
</dbReference>
<dbReference type="PANTHER" id="PTHR10353">
    <property type="entry name" value="GLYCOSYL HYDROLASE"/>
    <property type="match status" value="1"/>
</dbReference>
<dbReference type="PANTHER" id="PTHR10353:SF36">
    <property type="entry name" value="LP05116P"/>
    <property type="match status" value="1"/>
</dbReference>
<dbReference type="Pfam" id="PF00232">
    <property type="entry name" value="Glyco_hydro_1"/>
    <property type="match status" value="1"/>
</dbReference>
<dbReference type="PRINTS" id="PR00131">
    <property type="entry name" value="GLHYDRLASE1"/>
</dbReference>
<dbReference type="SUPFAM" id="SSF51445">
    <property type="entry name" value="(Trans)glycosidases"/>
    <property type="match status" value="1"/>
</dbReference>
<dbReference type="PROSITE" id="PS00572">
    <property type="entry name" value="GLYCOSYL_HYDROL_F1_1"/>
    <property type="match status" value="1"/>
</dbReference>
<dbReference type="PROSITE" id="PS00653">
    <property type="entry name" value="GLYCOSYL_HYDROL_F1_2"/>
    <property type="match status" value="1"/>
</dbReference>
<reference key="1">
    <citation type="journal article" date="2007" name="J. Bacteriol.">
        <title>Genome of the opportunistic pathogen Streptococcus sanguinis.</title>
        <authorList>
            <person name="Xu P."/>
            <person name="Alves J.M."/>
            <person name="Kitten T."/>
            <person name="Brown A."/>
            <person name="Chen Z."/>
            <person name="Ozaki L.S."/>
            <person name="Manque P."/>
            <person name="Ge X."/>
            <person name="Serrano M.G."/>
            <person name="Puiu D."/>
            <person name="Hendricks S."/>
            <person name="Wang Y."/>
            <person name="Chaplin M.D."/>
            <person name="Akan D."/>
            <person name="Paik S."/>
            <person name="Peterson D.L."/>
            <person name="Macrina F.L."/>
            <person name="Buck G.A."/>
        </authorList>
    </citation>
    <scope>NUCLEOTIDE SEQUENCE [LARGE SCALE GENOMIC DNA]</scope>
    <source>
        <strain>SK36</strain>
    </source>
</reference>
<accession>A3CPH0</accession>
<protein>
    <recommendedName>
        <fullName evidence="1">6-phospho-beta-galactosidase</fullName>
        <ecNumber evidence="1">3.2.1.85</ecNumber>
    </recommendedName>
    <alternativeName>
        <fullName evidence="1">Beta-D-phosphogalactoside galactohydrolase</fullName>
        <shortName evidence="1">PGALase</shortName>
    </alternativeName>
    <alternativeName>
        <fullName evidence="1">P-beta-Gal</fullName>
        <shortName evidence="1">PBG</shortName>
    </alternativeName>
</protein>
<sequence>MTKSLPKDFIFGGATAAYQAEGATHTDGKGPVAWDKYLEDNYWYTAEPASDFYHKYPVDLKLAEEYGVNGIRISIAWSRIFPTGYGEVNPKGVEFYHNLFAECHKRHVEPFVTLHHFDTPEALHSNGDFLNRENIEHFVNYAAFCFEEFPEVRYWTTFNEIGPIGDGQYLVGKFPPGIQYDLAKVFQSHHNMMVSHARAVKLYKDKGYKGEIGVVHALPTKYPYDPENPADVRAAELEDIIHNKFILDATYLGHYSDVTLAGVNHILKVNGGQLDLRDEDFAALEAAKDLNDFLGINYYMSDWMRDFDGETEIIHNGKGEKGSSKYQIKGVGRRESPTHIPKTDWDWIIYPQGLYDQIMRIKKDYPNYKKIYITENGLGYKDEFVDNTVYDDARIDYVKQHLEVLSDAIVDGANVKGYFIWSLMDVFSWSNGYEKRYGLFYVDFETQERYPKKSAHWYKKLAETQMIE</sequence>
<proteinExistence type="inferred from homology"/>
<name>LACG_STRSV</name>
<gene>
    <name evidence="1" type="primary">lacG</name>
    <name type="ordered locus">SSA_1692</name>
</gene>
<comment type="catalytic activity">
    <reaction evidence="1">
        <text>a 6-phospho-beta-D-galactoside + H2O = D-galactose 6-phosphate + an alcohol</text>
        <dbReference type="Rhea" id="RHEA:24568"/>
        <dbReference type="ChEBI" id="CHEBI:15377"/>
        <dbReference type="ChEBI" id="CHEBI:30879"/>
        <dbReference type="ChEBI" id="CHEBI:58534"/>
        <dbReference type="ChEBI" id="CHEBI:91004"/>
        <dbReference type="EC" id="3.2.1.85"/>
    </reaction>
</comment>
<comment type="pathway">
    <text evidence="1">Carbohydrate metabolism; lactose degradation; D-galactose 6-phosphate and beta-D-glucose from lactose 6-phosphate: step 1/1.</text>
</comment>
<comment type="similarity">
    <text evidence="1">Belongs to the glycosyl hydrolase 1 family.</text>
</comment>
<keyword id="KW-0326">Glycosidase</keyword>
<keyword id="KW-0378">Hydrolase</keyword>
<keyword id="KW-1185">Reference proteome</keyword>
<evidence type="ECO:0000255" key="1">
    <source>
        <dbReference type="HAMAP-Rule" id="MF_01574"/>
    </source>
</evidence>